<comment type="function">
    <text evidence="1">Component of the SCF(sconB) E3 ubiquitin ligase complex involved in the regulation of sulfur metabolite repression, probably by mediating the inactivation or degradation of the metR transcription factor.</text>
</comment>
<comment type="pathway">
    <text>Protein modification; protein ubiquitination.</text>
</comment>
<comment type="subunit">
    <text evidence="1">Component of the SCF(sconB) E3 ubiquitin ligase complex.</text>
</comment>
<comment type="similarity">
    <text evidence="4">Belongs to the WD repeat MET30/SCONB/SCON-2 family.</text>
</comment>
<organism>
    <name type="scientific">Aspergillus fumigatus (strain ATCC MYA-4609 / CBS 101355 / FGSC A1100 / Af293)</name>
    <name type="common">Neosartorya fumigata</name>
    <dbReference type="NCBI Taxonomy" id="330879"/>
    <lineage>
        <taxon>Eukaryota</taxon>
        <taxon>Fungi</taxon>
        <taxon>Dikarya</taxon>
        <taxon>Ascomycota</taxon>
        <taxon>Pezizomycotina</taxon>
        <taxon>Eurotiomycetes</taxon>
        <taxon>Eurotiomycetidae</taxon>
        <taxon>Eurotiales</taxon>
        <taxon>Aspergillaceae</taxon>
        <taxon>Aspergillus</taxon>
        <taxon>Aspergillus subgen. Fumigati</taxon>
    </lineage>
</organism>
<evidence type="ECO:0000250" key="1"/>
<evidence type="ECO:0000255" key="2">
    <source>
        <dbReference type="PROSITE-ProRule" id="PRU00080"/>
    </source>
</evidence>
<evidence type="ECO:0000256" key="3">
    <source>
        <dbReference type="SAM" id="MobiDB-lite"/>
    </source>
</evidence>
<evidence type="ECO:0000305" key="4"/>
<feature type="chain" id="PRO_0000397248" description="Probable E3 ubiquitin ligase complex SCF subunit sconB">
    <location>
        <begin position="1"/>
        <end position="696"/>
    </location>
</feature>
<feature type="domain" description="F-box" evidence="2">
    <location>
        <begin position="193"/>
        <end position="239"/>
    </location>
</feature>
<feature type="repeat" description="WD 1">
    <location>
        <begin position="365"/>
        <end position="402"/>
    </location>
</feature>
<feature type="repeat" description="WD 2">
    <location>
        <begin position="405"/>
        <end position="444"/>
    </location>
</feature>
<feature type="repeat" description="WD 3">
    <location>
        <begin position="446"/>
        <end position="482"/>
    </location>
</feature>
<feature type="repeat" description="WD 4">
    <location>
        <begin position="484"/>
        <end position="525"/>
    </location>
</feature>
<feature type="repeat" description="WD 5">
    <location>
        <begin position="579"/>
        <end position="622"/>
    </location>
</feature>
<feature type="repeat" description="WD 6">
    <location>
        <begin position="623"/>
        <end position="662"/>
    </location>
</feature>
<feature type="repeat" description="WD 7">
    <location>
        <begin position="665"/>
        <end position="696"/>
    </location>
</feature>
<feature type="region of interest" description="Disordered" evidence="3">
    <location>
        <begin position="1"/>
        <end position="72"/>
    </location>
</feature>
<feature type="region of interest" description="Disordered" evidence="3">
    <location>
        <begin position="290"/>
        <end position="314"/>
    </location>
</feature>
<feature type="region of interest" description="Disordered" evidence="3">
    <location>
        <begin position="554"/>
        <end position="596"/>
    </location>
</feature>
<feature type="compositionally biased region" description="Basic and acidic residues" evidence="3">
    <location>
        <begin position="1"/>
        <end position="12"/>
    </location>
</feature>
<feature type="compositionally biased region" description="Polar residues" evidence="3">
    <location>
        <begin position="55"/>
        <end position="69"/>
    </location>
</feature>
<feature type="compositionally biased region" description="Basic and acidic residues" evidence="3">
    <location>
        <begin position="302"/>
        <end position="313"/>
    </location>
</feature>
<gene>
    <name type="primary">sconB</name>
    <name type="ORF">AFUA_2G14110</name>
</gene>
<proteinExistence type="inferred from homology"/>
<keyword id="KW-1185">Reference proteome</keyword>
<keyword id="KW-0677">Repeat</keyword>
<keyword id="KW-0804">Transcription</keyword>
<keyword id="KW-0805">Transcription regulation</keyword>
<keyword id="KW-0833">Ubl conjugation pathway</keyword>
<keyword id="KW-0853">WD repeat</keyword>
<sequence length="696" mass="77712">MDAHELSFRDGHGSSTSTMKDGCASAEKPHYLPGDSSFTSVFGPSETVEDVETEPGSTQDKPHSFNTQKPIRENLAGKNVAPFLARHIPEQYAPLGSQGGQPVEISSANSKYCYRHRPDLKCRRQADEPTMDKLQRELETLPQSDQQGIAHAWSIFSAAPAKHRKLILQGIMAQCCFPQLSFISATVRDLIRIDFLTALPPEISFKILCYLDTTSLCKAAQVSRRWRALADDDVVWHRMCEQHIHRKCKKCGWGLPLLDRKRLRESKREIERRAATWDVSKQPAGIEGSSATIETAAAGSKRKPESGKEDTAMVKRQCTSIVSQSEQNEDYFKTRYRPWKEVYKDRFKVGTNWKYGRCSTRVFKGHSNGIMCLQFEDNILATGSYDATIKIWDTETGEELRTLKGHQSGIRCLQFDDTKLISGSMDHTLKVWNWRTGECISTYSGHRGGVVGLHFDATILASGSVDKTVKIWNFEDKSTCLLRGHTDWVNAVRVDSASRTVFSASDDCTVKLWDLDTKSCIRTFHGHVGQVQQVVPLPREFEFEDHDVECENDNVSVTSGDSPAASPQALPGFDGQTSDTPSSAFGPAFDDGRPSPPRYIVTSALDSTIRLWETSSGRCLRTFFGHLEGVWALAADTLRIVSGAEDRMVKIWDPRTGKCERTFTGHSGPVTCIGLGDSRFATGSEDCEVRMYSFQT</sequence>
<protein>
    <recommendedName>
        <fullName>Probable E3 ubiquitin ligase complex SCF subunit sconB</fullName>
    </recommendedName>
    <alternativeName>
        <fullName>Sulfur controller B</fullName>
    </alternativeName>
    <alternativeName>
        <fullName>Sulfur metabolite repression control protein B</fullName>
    </alternativeName>
</protein>
<accession>Q4X0A9</accession>
<name>SCONB_ASPFU</name>
<reference key="1">
    <citation type="journal article" date="2005" name="Nature">
        <title>Genomic sequence of the pathogenic and allergenic filamentous fungus Aspergillus fumigatus.</title>
        <authorList>
            <person name="Nierman W.C."/>
            <person name="Pain A."/>
            <person name="Anderson M.J."/>
            <person name="Wortman J.R."/>
            <person name="Kim H.S."/>
            <person name="Arroyo J."/>
            <person name="Berriman M."/>
            <person name="Abe K."/>
            <person name="Archer D.B."/>
            <person name="Bermejo C."/>
            <person name="Bennett J.W."/>
            <person name="Bowyer P."/>
            <person name="Chen D."/>
            <person name="Collins M."/>
            <person name="Coulsen R."/>
            <person name="Davies R."/>
            <person name="Dyer P.S."/>
            <person name="Farman M.L."/>
            <person name="Fedorova N."/>
            <person name="Fedorova N.D."/>
            <person name="Feldblyum T.V."/>
            <person name="Fischer R."/>
            <person name="Fosker N."/>
            <person name="Fraser A."/>
            <person name="Garcia J.L."/>
            <person name="Garcia M.J."/>
            <person name="Goble A."/>
            <person name="Goldman G.H."/>
            <person name="Gomi K."/>
            <person name="Griffith-Jones S."/>
            <person name="Gwilliam R."/>
            <person name="Haas B.J."/>
            <person name="Haas H."/>
            <person name="Harris D.E."/>
            <person name="Horiuchi H."/>
            <person name="Huang J."/>
            <person name="Humphray S."/>
            <person name="Jimenez J."/>
            <person name="Keller N."/>
            <person name="Khouri H."/>
            <person name="Kitamoto K."/>
            <person name="Kobayashi T."/>
            <person name="Konzack S."/>
            <person name="Kulkarni R."/>
            <person name="Kumagai T."/>
            <person name="Lafton A."/>
            <person name="Latge J.-P."/>
            <person name="Li W."/>
            <person name="Lord A."/>
            <person name="Lu C."/>
            <person name="Majoros W.H."/>
            <person name="May G.S."/>
            <person name="Miller B.L."/>
            <person name="Mohamoud Y."/>
            <person name="Molina M."/>
            <person name="Monod M."/>
            <person name="Mouyna I."/>
            <person name="Mulligan S."/>
            <person name="Murphy L.D."/>
            <person name="O'Neil S."/>
            <person name="Paulsen I."/>
            <person name="Penalva M.A."/>
            <person name="Pertea M."/>
            <person name="Price C."/>
            <person name="Pritchard B.L."/>
            <person name="Quail M.A."/>
            <person name="Rabbinowitsch E."/>
            <person name="Rawlins N."/>
            <person name="Rajandream M.A."/>
            <person name="Reichard U."/>
            <person name="Renauld H."/>
            <person name="Robson G.D."/>
            <person name="Rodriguez de Cordoba S."/>
            <person name="Rodriguez-Pena J.M."/>
            <person name="Ronning C.M."/>
            <person name="Rutter S."/>
            <person name="Salzberg S.L."/>
            <person name="Sanchez M."/>
            <person name="Sanchez-Ferrero J.C."/>
            <person name="Saunders D."/>
            <person name="Seeger K."/>
            <person name="Squares R."/>
            <person name="Squares S."/>
            <person name="Takeuchi M."/>
            <person name="Tekaia F."/>
            <person name="Turner G."/>
            <person name="Vazquez de Aldana C.R."/>
            <person name="Weidman J."/>
            <person name="White O."/>
            <person name="Woodward J.R."/>
            <person name="Yu J.-H."/>
            <person name="Fraser C.M."/>
            <person name="Galagan J.E."/>
            <person name="Asai K."/>
            <person name="Machida M."/>
            <person name="Hall N."/>
            <person name="Barrell B.G."/>
            <person name="Denning D.W."/>
        </authorList>
    </citation>
    <scope>NUCLEOTIDE SEQUENCE [LARGE SCALE GENOMIC DNA]</scope>
    <source>
        <strain>ATCC MYA-4609 / CBS 101355 / FGSC A1100 / Af293</strain>
    </source>
</reference>
<dbReference type="EMBL" id="AAHF01000001">
    <property type="protein sequence ID" value="EAL93706.1"/>
    <property type="molecule type" value="Genomic_DNA"/>
</dbReference>
<dbReference type="RefSeq" id="XP_755744.1">
    <property type="nucleotide sequence ID" value="XM_750651.1"/>
</dbReference>
<dbReference type="SMR" id="Q4X0A9"/>
<dbReference type="FunCoup" id="Q4X0A9">
    <property type="interactions" value="162"/>
</dbReference>
<dbReference type="STRING" id="330879.Q4X0A9"/>
<dbReference type="EnsemblFungi" id="EAL93706">
    <property type="protein sequence ID" value="EAL93706"/>
    <property type="gene ID" value="AFUA_2G14110"/>
</dbReference>
<dbReference type="GeneID" id="3513124"/>
<dbReference type="KEGG" id="afm:AFUA_2G14110"/>
<dbReference type="VEuPathDB" id="FungiDB:Afu2g14110"/>
<dbReference type="eggNOG" id="KOG0274">
    <property type="taxonomic scope" value="Eukaryota"/>
</dbReference>
<dbReference type="HOGENOM" id="CLU_000288_103_1_1"/>
<dbReference type="InParanoid" id="Q4X0A9"/>
<dbReference type="OMA" id="GIAHVWS"/>
<dbReference type="OrthoDB" id="5580488at2759"/>
<dbReference type="UniPathway" id="UPA00143"/>
<dbReference type="Proteomes" id="UP000002530">
    <property type="component" value="Chromosome 2"/>
</dbReference>
<dbReference type="GO" id="GO:0043224">
    <property type="term" value="C:nuclear SCF ubiquitin ligase complex"/>
    <property type="evidence" value="ECO:0000318"/>
    <property type="project" value="GO_Central"/>
</dbReference>
<dbReference type="GO" id="GO:0005634">
    <property type="term" value="C:nucleus"/>
    <property type="evidence" value="ECO:0000318"/>
    <property type="project" value="GO_Central"/>
</dbReference>
<dbReference type="GO" id="GO:0043130">
    <property type="term" value="F:ubiquitin binding"/>
    <property type="evidence" value="ECO:0000318"/>
    <property type="project" value="GO_Central"/>
</dbReference>
<dbReference type="GO" id="GO:0000209">
    <property type="term" value="P:protein polyubiquitination"/>
    <property type="evidence" value="ECO:0000318"/>
    <property type="project" value="GO_Central"/>
</dbReference>
<dbReference type="CDD" id="cd22147">
    <property type="entry name" value="F-box_SpPof1-like"/>
    <property type="match status" value="1"/>
</dbReference>
<dbReference type="CDD" id="cd00200">
    <property type="entry name" value="WD40"/>
    <property type="match status" value="1"/>
</dbReference>
<dbReference type="FunFam" id="1.20.1280.50:FF:000016">
    <property type="entry name" value="E3 ubiquitin ligase complex SCF subunit sconB"/>
    <property type="match status" value="1"/>
</dbReference>
<dbReference type="FunFam" id="2.130.10.10:FF:000770">
    <property type="entry name" value="E3 ubiquitin ligase complex SCF subunit sconB"/>
    <property type="match status" value="1"/>
</dbReference>
<dbReference type="FunFam" id="2.130.10.10:FF:000890">
    <property type="entry name" value="Probable E3 ubiquitin ligase complex SCF subunit sconB"/>
    <property type="match status" value="1"/>
</dbReference>
<dbReference type="Gene3D" id="1.20.1280.50">
    <property type="match status" value="1"/>
</dbReference>
<dbReference type="Gene3D" id="2.130.10.10">
    <property type="entry name" value="YVTN repeat-like/Quinoprotein amine dehydrogenase"/>
    <property type="match status" value="2"/>
</dbReference>
<dbReference type="InterPro" id="IPR036047">
    <property type="entry name" value="F-box-like_dom_sf"/>
</dbReference>
<dbReference type="InterPro" id="IPR001810">
    <property type="entry name" value="F-box_dom"/>
</dbReference>
<dbReference type="InterPro" id="IPR020472">
    <property type="entry name" value="G-protein_beta_WD-40_rep"/>
</dbReference>
<dbReference type="InterPro" id="IPR051075">
    <property type="entry name" value="SCF_subunit_WD-repeat"/>
</dbReference>
<dbReference type="InterPro" id="IPR015943">
    <property type="entry name" value="WD40/YVTN_repeat-like_dom_sf"/>
</dbReference>
<dbReference type="InterPro" id="IPR019775">
    <property type="entry name" value="WD40_repeat_CS"/>
</dbReference>
<dbReference type="InterPro" id="IPR036322">
    <property type="entry name" value="WD40_repeat_dom_sf"/>
</dbReference>
<dbReference type="InterPro" id="IPR001680">
    <property type="entry name" value="WD40_rpt"/>
</dbReference>
<dbReference type="PANTHER" id="PTHR19872">
    <property type="entry name" value="UBIQUITIN LIGASE SPECIFICITY FACTOR/HREP PROTEIN"/>
    <property type="match status" value="1"/>
</dbReference>
<dbReference type="PANTHER" id="PTHR19872:SF9">
    <property type="entry name" value="UBIQUITIN-BINDING SDF UBIQUITIN LIGASE COMPLEX SUBUNIT"/>
    <property type="match status" value="1"/>
</dbReference>
<dbReference type="Pfam" id="PF12937">
    <property type="entry name" value="F-box-like"/>
    <property type="match status" value="1"/>
</dbReference>
<dbReference type="Pfam" id="PF00400">
    <property type="entry name" value="WD40"/>
    <property type="match status" value="6"/>
</dbReference>
<dbReference type="PRINTS" id="PR00320">
    <property type="entry name" value="GPROTEINBRPT"/>
</dbReference>
<dbReference type="SMART" id="SM00256">
    <property type="entry name" value="FBOX"/>
    <property type="match status" value="1"/>
</dbReference>
<dbReference type="SMART" id="SM00320">
    <property type="entry name" value="WD40"/>
    <property type="match status" value="7"/>
</dbReference>
<dbReference type="SUPFAM" id="SSF81383">
    <property type="entry name" value="F-box domain"/>
    <property type="match status" value="1"/>
</dbReference>
<dbReference type="SUPFAM" id="SSF50978">
    <property type="entry name" value="WD40 repeat-like"/>
    <property type="match status" value="1"/>
</dbReference>
<dbReference type="PROSITE" id="PS50181">
    <property type="entry name" value="FBOX"/>
    <property type="match status" value="1"/>
</dbReference>
<dbReference type="PROSITE" id="PS00678">
    <property type="entry name" value="WD_REPEATS_1"/>
    <property type="match status" value="4"/>
</dbReference>
<dbReference type="PROSITE" id="PS50082">
    <property type="entry name" value="WD_REPEATS_2"/>
    <property type="match status" value="7"/>
</dbReference>
<dbReference type="PROSITE" id="PS50294">
    <property type="entry name" value="WD_REPEATS_REGION"/>
    <property type="match status" value="1"/>
</dbReference>